<keyword id="KW-0004">4Fe-4S</keyword>
<keyword id="KW-0408">Iron</keyword>
<keyword id="KW-0411">Iron-sulfur</keyword>
<keyword id="KW-0456">Lyase</keyword>
<keyword id="KW-0479">Metal-binding</keyword>
<keyword id="KW-1185">Reference proteome</keyword>
<keyword id="KW-0949">S-adenosyl-L-methionine</keyword>
<keyword id="KW-0784">Thiamine biosynthesis</keyword>
<keyword id="KW-0862">Zinc</keyword>
<reference key="1">
    <citation type="journal article" date="2008" name="Genome Res.">
        <title>The genome of Pelotomaculum thermopropionicum reveals niche-associated evolution in anaerobic microbiota.</title>
        <authorList>
            <person name="Kosaka T."/>
            <person name="Kato S."/>
            <person name="Shimoyama T."/>
            <person name="Ishii S."/>
            <person name="Abe T."/>
            <person name="Watanabe K."/>
        </authorList>
    </citation>
    <scope>NUCLEOTIDE SEQUENCE [LARGE SCALE GENOMIC DNA]</scope>
    <source>
        <strain>DSM 13744 / JCM 10971 / SI</strain>
    </source>
</reference>
<organism>
    <name type="scientific">Pelotomaculum thermopropionicum (strain DSM 13744 / JCM 10971 / SI)</name>
    <dbReference type="NCBI Taxonomy" id="370438"/>
    <lineage>
        <taxon>Bacteria</taxon>
        <taxon>Bacillati</taxon>
        <taxon>Bacillota</taxon>
        <taxon>Clostridia</taxon>
        <taxon>Eubacteriales</taxon>
        <taxon>Desulfotomaculaceae</taxon>
        <taxon>Pelotomaculum</taxon>
    </lineage>
</organism>
<proteinExistence type="inferred from homology"/>
<dbReference type="EC" id="4.1.99.17" evidence="1"/>
<dbReference type="EMBL" id="AP009389">
    <property type="protein sequence ID" value="BAF58825.1"/>
    <property type="molecule type" value="Genomic_DNA"/>
</dbReference>
<dbReference type="SMR" id="A5D4K5"/>
<dbReference type="STRING" id="370438.PTH_0644"/>
<dbReference type="KEGG" id="pth:PTH_0644"/>
<dbReference type="eggNOG" id="COG0422">
    <property type="taxonomic scope" value="Bacteria"/>
</dbReference>
<dbReference type="HOGENOM" id="CLU_013181_2_2_9"/>
<dbReference type="UniPathway" id="UPA00060"/>
<dbReference type="Proteomes" id="UP000006556">
    <property type="component" value="Chromosome"/>
</dbReference>
<dbReference type="GO" id="GO:0005829">
    <property type="term" value="C:cytosol"/>
    <property type="evidence" value="ECO:0007669"/>
    <property type="project" value="TreeGrafter"/>
</dbReference>
<dbReference type="GO" id="GO:0051539">
    <property type="term" value="F:4 iron, 4 sulfur cluster binding"/>
    <property type="evidence" value="ECO:0007669"/>
    <property type="project" value="UniProtKB-KW"/>
</dbReference>
<dbReference type="GO" id="GO:0016830">
    <property type="term" value="F:carbon-carbon lyase activity"/>
    <property type="evidence" value="ECO:0007669"/>
    <property type="project" value="InterPro"/>
</dbReference>
<dbReference type="GO" id="GO:0008270">
    <property type="term" value="F:zinc ion binding"/>
    <property type="evidence" value="ECO:0007669"/>
    <property type="project" value="UniProtKB-UniRule"/>
</dbReference>
<dbReference type="GO" id="GO:0009228">
    <property type="term" value="P:thiamine biosynthetic process"/>
    <property type="evidence" value="ECO:0007669"/>
    <property type="project" value="UniProtKB-KW"/>
</dbReference>
<dbReference type="GO" id="GO:0009229">
    <property type="term" value="P:thiamine diphosphate biosynthetic process"/>
    <property type="evidence" value="ECO:0007669"/>
    <property type="project" value="UniProtKB-UniRule"/>
</dbReference>
<dbReference type="FunFam" id="3.20.20.540:FF:000001">
    <property type="entry name" value="Phosphomethylpyrimidine synthase"/>
    <property type="match status" value="1"/>
</dbReference>
<dbReference type="Gene3D" id="6.10.250.620">
    <property type="match status" value="1"/>
</dbReference>
<dbReference type="Gene3D" id="3.20.20.540">
    <property type="entry name" value="Radical SAM ThiC family, central domain"/>
    <property type="match status" value="1"/>
</dbReference>
<dbReference type="HAMAP" id="MF_00089">
    <property type="entry name" value="ThiC"/>
    <property type="match status" value="1"/>
</dbReference>
<dbReference type="InterPro" id="IPR037509">
    <property type="entry name" value="ThiC"/>
</dbReference>
<dbReference type="InterPro" id="IPR038521">
    <property type="entry name" value="ThiC/Bza_core_dom"/>
</dbReference>
<dbReference type="InterPro" id="IPR002817">
    <property type="entry name" value="ThiC/BzaA/B"/>
</dbReference>
<dbReference type="NCBIfam" id="NF009895">
    <property type="entry name" value="PRK13352.1"/>
    <property type="match status" value="1"/>
</dbReference>
<dbReference type="NCBIfam" id="TIGR00190">
    <property type="entry name" value="thiC"/>
    <property type="match status" value="1"/>
</dbReference>
<dbReference type="PANTHER" id="PTHR30557:SF1">
    <property type="entry name" value="PHOSPHOMETHYLPYRIMIDINE SYNTHASE, CHLOROPLASTIC"/>
    <property type="match status" value="1"/>
</dbReference>
<dbReference type="PANTHER" id="PTHR30557">
    <property type="entry name" value="THIAMINE BIOSYNTHESIS PROTEIN THIC"/>
    <property type="match status" value="1"/>
</dbReference>
<dbReference type="Pfam" id="PF01964">
    <property type="entry name" value="ThiC_Rad_SAM"/>
    <property type="match status" value="1"/>
</dbReference>
<dbReference type="SFLD" id="SFLDF00407">
    <property type="entry name" value="phosphomethylpyrimidine_syntha"/>
    <property type="match status" value="1"/>
</dbReference>
<dbReference type="SFLD" id="SFLDG01114">
    <property type="entry name" value="phosphomethylpyrimidine_syntha"/>
    <property type="match status" value="1"/>
</dbReference>
<dbReference type="SFLD" id="SFLDS00113">
    <property type="entry name" value="Radical_SAM_Phosphomethylpyrim"/>
    <property type="match status" value="1"/>
</dbReference>
<sequence>MNYATQMEAARKGIITREMETVARKEMVDPAKLRELIAEGRVVIPANKNHASLDPCGIGQGLRTKINVNLGVSRDCCNIGMELEKARLAIELKADAIMDLSCYGRTEEFRRRLIEMSPAAVGTVPVYDAVGFYGKELKEISAEEFLGVVEKHAQDGVDFMTIHAGINRETAARFKKNPRLTNIVSRGGSLLFAWMELNGRENPFYEYFDELLEICRKYDVTISLGDACRPGSVKDATDASQIQELIVLGELTKRAWEKDVQVMIEGPGHMPLNEIIPNMLLEKKLCHGAPFYVLGPLVTDVAPGYDHITSAIGGAIAAASGADFLCYVTPAEHLRLPTLEDMKEGIIASRIAAHAADIAKGVPGARQWDDKMSEARRNLDWQKMFELALDPEKARRYRAESQPESEDTCTMCGKMCAVRNMNRVLSGAGPDG</sequence>
<comment type="function">
    <text evidence="1">Catalyzes the synthesis of the hydroxymethylpyrimidine phosphate (HMP-P) moiety of thiamine from aminoimidazole ribotide (AIR) in a radical S-adenosyl-L-methionine (SAM)-dependent reaction.</text>
</comment>
<comment type="catalytic activity">
    <reaction evidence="1">
        <text>5-amino-1-(5-phospho-beta-D-ribosyl)imidazole + S-adenosyl-L-methionine = 4-amino-2-methyl-5-(phosphooxymethyl)pyrimidine + CO + 5'-deoxyadenosine + formate + L-methionine + 3 H(+)</text>
        <dbReference type="Rhea" id="RHEA:24840"/>
        <dbReference type="ChEBI" id="CHEBI:15378"/>
        <dbReference type="ChEBI" id="CHEBI:15740"/>
        <dbReference type="ChEBI" id="CHEBI:17245"/>
        <dbReference type="ChEBI" id="CHEBI:17319"/>
        <dbReference type="ChEBI" id="CHEBI:57844"/>
        <dbReference type="ChEBI" id="CHEBI:58354"/>
        <dbReference type="ChEBI" id="CHEBI:59789"/>
        <dbReference type="ChEBI" id="CHEBI:137981"/>
        <dbReference type="EC" id="4.1.99.17"/>
    </reaction>
</comment>
<comment type="cofactor">
    <cofactor evidence="1">
        <name>[4Fe-4S] cluster</name>
        <dbReference type="ChEBI" id="CHEBI:49883"/>
    </cofactor>
    <text evidence="1">Binds 1 [4Fe-4S] cluster per subunit. The cluster is coordinated with 3 cysteines and an exchangeable S-adenosyl-L-methionine.</text>
</comment>
<comment type="pathway">
    <text evidence="1">Cofactor biosynthesis; thiamine diphosphate biosynthesis.</text>
</comment>
<comment type="similarity">
    <text evidence="1">Belongs to the ThiC family.</text>
</comment>
<feature type="chain" id="PRO_1000075440" description="Phosphomethylpyrimidine synthase">
    <location>
        <begin position="1"/>
        <end position="432"/>
    </location>
</feature>
<feature type="binding site" evidence="1">
    <location>
        <position position="69"/>
    </location>
    <ligand>
        <name>substrate</name>
    </ligand>
</feature>
<feature type="binding site" evidence="1">
    <location>
        <position position="98"/>
    </location>
    <ligand>
        <name>substrate</name>
    </ligand>
</feature>
<feature type="binding site" evidence="1">
    <location>
        <position position="127"/>
    </location>
    <ligand>
        <name>substrate</name>
    </ligand>
</feature>
<feature type="binding site" evidence="1">
    <location>
        <position position="163"/>
    </location>
    <ligand>
        <name>substrate</name>
    </ligand>
</feature>
<feature type="binding site" evidence="1">
    <location>
        <begin position="185"/>
        <end position="187"/>
    </location>
    <ligand>
        <name>substrate</name>
    </ligand>
</feature>
<feature type="binding site" evidence="1">
    <location>
        <begin position="226"/>
        <end position="229"/>
    </location>
    <ligand>
        <name>substrate</name>
    </ligand>
</feature>
<feature type="binding site" evidence="1">
    <location>
        <position position="265"/>
    </location>
    <ligand>
        <name>substrate</name>
    </ligand>
</feature>
<feature type="binding site" evidence="1">
    <location>
        <position position="269"/>
    </location>
    <ligand>
        <name>Zn(2+)</name>
        <dbReference type="ChEBI" id="CHEBI:29105"/>
    </ligand>
</feature>
<feature type="binding site" evidence="1">
    <location>
        <position position="292"/>
    </location>
    <ligand>
        <name>substrate</name>
    </ligand>
</feature>
<feature type="binding site" evidence="1">
    <location>
        <position position="333"/>
    </location>
    <ligand>
        <name>Zn(2+)</name>
        <dbReference type="ChEBI" id="CHEBI:29105"/>
    </ligand>
</feature>
<feature type="binding site" evidence="1">
    <location>
        <position position="409"/>
    </location>
    <ligand>
        <name>[4Fe-4S] cluster</name>
        <dbReference type="ChEBI" id="CHEBI:49883"/>
        <note>4Fe-4S-S-AdoMet</note>
    </ligand>
</feature>
<feature type="binding site" evidence="1">
    <location>
        <position position="412"/>
    </location>
    <ligand>
        <name>[4Fe-4S] cluster</name>
        <dbReference type="ChEBI" id="CHEBI:49883"/>
        <note>4Fe-4S-S-AdoMet</note>
    </ligand>
</feature>
<feature type="binding site" evidence="1">
    <location>
        <position position="416"/>
    </location>
    <ligand>
        <name>[4Fe-4S] cluster</name>
        <dbReference type="ChEBI" id="CHEBI:49883"/>
        <note>4Fe-4S-S-AdoMet</note>
    </ligand>
</feature>
<evidence type="ECO:0000255" key="1">
    <source>
        <dbReference type="HAMAP-Rule" id="MF_00089"/>
    </source>
</evidence>
<name>THIC_PELTS</name>
<accession>A5D4K5</accession>
<gene>
    <name evidence="1" type="primary">thiC</name>
    <name type="ordered locus">PTH_0644</name>
</gene>
<protein>
    <recommendedName>
        <fullName evidence="1">Phosphomethylpyrimidine synthase</fullName>
        <ecNumber evidence="1">4.1.99.17</ecNumber>
    </recommendedName>
    <alternativeName>
        <fullName evidence="1">Hydroxymethylpyrimidine phosphate synthase</fullName>
        <shortName evidence="1">HMP-P synthase</shortName>
        <shortName evidence="1">HMP-phosphate synthase</shortName>
        <shortName evidence="1">HMPP synthase</shortName>
    </alternativeName>
    <alternativeName>
        <fullName evidence="1">Thiamine biosynthesis protein ThiC</fullName>
    </alternativeName>
</protein>